<protein>
    <recommendedName>
        <fullName evidence="1">Small ribosomal subunit protein uS11</fullName>
    </recommendedName>
    <alternativeName>
        <fullName evidence="2">30S ribosomal protein S11</fullName>
    </alternativeName>
</protein>
<name>RS11_PSEA8</name>
<keyword id="KW-0687">Ribonucleoprotein</keyword>
<keyword id="KW-0689">Ribosomal protein</keyword>
<keyword id="KW-0694">RNA-binding</keyword>
<keyword id="KW-0699">rRNA-binding</keyword>
<sequence>MAKPAARPRKKVKKTVVDGIAHIHASFNNTIVTITDRQGNALSWATSGGSGFRGSRKSTPFAAQVAAERAGQAALEYGLKNLDVNVKGPGPGRESAVRALNACGYKIASITDVTPIPHNGCRPPKKRRV</sequence>
<gene>
    <name evidence="1" type="primary">rpsK</name>
    <name type="ordered locus">PLES_06871</name>
</gene>
<proteinExistence type="inferred from homology"/>
<comment type="function">
    <text evidence="1">Located on the platform of the 30S subunit, it bridges several disparate RNA helices of the 16S rRNA. Forms part of the Shine-Dalgarno cleft in the 70S ribosome.</text>
</comment>
<comment type="subunit">
    <text evidence="1">Part of the 30S ribosomal subunit. Interacts with proteins S7 and S18. Binds to IF-3.</text>
</comment>
<comment type="similarity">
    <text evidence="1">Belongs to the universal ribosomal protein uS11 family.</text>
</comment>
<dbReference type="EMBL" id="FM209186">
    <property type="protein sequence ID" value="CAW25414.1"/>
    <property type="molecule type" value="Genomic_DNA"/>
</dbReference>
<dbReference type="RefSeq" id="WP_003093689.1">
    <property type="nucleotide sequence ID" value="NC_011770.1"/>
</dbReference>
<dbReference type="SMR" id="B7V666"/>
<dbReference type="GeneID" id="88184059"/>
<dbReference type="KEGG" id="pag:PLES_06871"/>
<dbReference type="HOGENOM" id="CLU_072439_5_0_6"/>
<dbReference type="GO" id="GO:1990904">
    <property type="term" value="C:ribonucleoprotein complex"/>
    <property type="evidence" value="ECO:0007669"/>
    <property type="project" value="UniProtKB-KW"/>
</dbReference>
<dbReference type="GO" id="GO:0005840">
    <property type="term" value="C:ribosome"/>
    <property type="evidence" value="ECO:0007669"/>
    <property type="project" value="UniProtKB-KW"/>
</dbReference>
<dbReference type="GO" id="GO:0019843">
    <property type="term" value="F:rRNA binding"/>
    <property type="evidence" value="ECO:0007669"/>
    <property type="project" value="UniProtKB-UniRule"/>
</dbReference>
<dbReference type="GO" id="GO:0003735">
    <property type="term" value="F:structural constituent of ribosome"/>
    <property type="evidence" value="ECO:0007669"/>
    <property type="project" value="InterPro"/>
</dbReference>
<dbReference type="GO" id="GO:0006412">
    <property type="term" value="P:translation"/>
    <property type="evidence" value="ECO:0007669"/>
    <property type="project" value="UniProtKB-UniRule"/>
</dbReference>
<dbReference type="FunFam" id="3.30.420.80:FF:000001">
    <property type="entry name" value="30S ribosomal protein S11"/>
    <property type="match status" value="1"/>
</dbReference>
<dbReference type="Gene3D" id="3.30.420.80">
    <property type="entry name" value="Ribosomal protein S11"/>
    <property type="match status" value="1"/>
</dbReference>
<dbReference type="HAMAP" id="MF_01310">
    <property type="entry name" value="Ribosomal_uS11"/>
    <property type="match status" value="1"/>
</dbReference>
<dbReference type="InterPro" id="IPR001971">
    <property type="entry name" value="Ribosomal_uS11"/>
</dbReference>
<dbReference type="InterPro" id="IPR019981">
    <property type="entry name" value="Ribosomal_uS11_bac-type"/>
</dbReference>
<dbReference type="InterPro" id="IPR018102">
    <property type="entry name" value="Ribosomal_uS11_CS"/>
</dbReference>
<dbReference type="InterPro" id="IPR036967">
    <property type="entry name" value="Ribosomal_uS11_sf"/>
</dbReference>
<dbReference type="NCBIfam" id="NF003698">
    <property type="entry name" value="PRK05309.1"/>
    <property type="match status" value="1"/>
</dbReference>
<dbReference type="NCBIfam" id="TIGR03632">
    <property type="entry name" value="uS11_bact"/>
    <property type="match status" value="1"/>
</dbReference>
<dbReference type="PANTHER" id="PTHR11759">
    <property type="entry name" value="40S RIBOSOMAL PROTEIN S14/30S RIBOSOMAL PROTEIN S11"/>
    <property type="match status" value="1"/>
</dbReference>
<dbReference type="Pfam" id="PF00411">
    <property type="entry name" value="Ribosomal_S11"/>
    <property type="match status" value="1"/>
</dbReference>
<dbReference type="PIRSF" id="PIRSF002131">
    <property type="entry name" value="Ribosomal_S11"/>
    <property type="match status" value="1"/>
</dbReference>
<dbReference type="SUPFAM" id="SSF53137">
    <property type="entry name" value="Translational machinery components"/>
    <property type="match status" value="1"/>
</dbReference>
<dbReference type="PROSITE" id="PS00054">
    <property type="entry name" value="RIBOSOMAL_S11"/>
    <property type="match status" value="1"/>
</dbReference>
<reference key="1">
    <citation type="journal article" date="2009" name="Genome Res.">
        <title>Newly introduced genomic prophage islands are critical determinants of in vivo competitiveness in the Liverpool epidemic strain of Pseudomonas aeruginosa.</title>
        <authorList>
            <person name="Winstanley C."/>
            <person name="Langille M.G.I."/>
            <person name="Fothergill J.L."/>
            <person name="Kukavica-Ibrulj I."/>
            <person name="Paradis-Bleau C."/>
            <person name="Sanschagrin F."/>
            <person name="Thomson N.R."/>
            <person name="Winsor G.L."/>
            <person name="Quail M.A."/>
            <person name="Lennard N."/>
            <person name="Bignell A."/>
            <person name="Clarke L."/>
            <person name="Seeger K."/>
            <person name="Saunders D."/>
            <person name="Harris D."/>
            <person name="Parkhill J."/>
            <person name="Hancock R.E.W."/>
            <person name="Brinkman F.S.L."/>
            <person name="Levesque R.C."/>
        </authorList>
    </citation>
    <scope>NUCLEOTIDE SEQUENCE [LARGE SCALE GENOMIC DNA]</scope>
    <source>
        <strain>LESB58</strain>
    </source>
</reference>
<feature type="chain" id="PRO_1000141127" description="Small ribosomal subunit protein uS11">
    <location>
        <begin position="1"/>
        <end position="129"/>
    </location>
</feature>
<organism>
    <name type="scientific">Pseudomonas aeruginosa (strain LESB58)</name>
    <dbReference type="NCBI Taxonomy" id="557722"/>
    <lineage>
        <taxon>Bacteria</taxon>
        <taxon>Pseudomonadati</taxon>
        <taxon>Pseudomonadota</taxon>
        <taxon>Gammaproteobacteria</taxon>
        <taxon>Pseudomonadales</taxon>
        <taxon>Pseudomonadaceae</taxon>
        <taxon>Pseudomonas</taxon>
    </lineage>
</organism>
<accession>B7V666</accession>
<evidence type="ECO:0000255" key="1">
    <source>
        <dbReference type="HAMAP-Rule" id="MF_01310"/>
    </source>
</evidence>
<evidence type="ECO:0000305" key="2"/>